<evidence type="ECO:0000255" key="1">
    <source>
        <dbReference type="HAMAP-Rule" id="MF_01622"/>
    </source>
</evidence>
<reference key="1">
    <citation type="journal article" date="2004" name="Nat. Genet.">
        <title>Comparison of genome degradation in Paratyphi A and Typhi, human-restricted serovars of Salmonella enterica that cause typhoid.</title>
        <authorList>
            <person name="McClelland M."/>
            <person name="Sanderson K.E."/>
            <person name="Clifton S.W."/>
            <person name="Latreille P."/>
            <person name="Porwollik S."/>
            <person name="Sabo A."/>
            <person name="Meyer R."/>
            <person name="Bieri T."/>
            <person name="Ozersky P."/>
            <person name="McLellan M."/>
            <person name="Harkins C.R."/>
            <person name="Wang C."/>
            <person name="Nguyen C."/>
            <person name="Berghoff A."/>
            <person name="Elliott G."/>
            <person name="Kohlberg S."/>
            <person name="Strong C."/>
            <person name="Du F."/>
            <person name="Carter J."/>
            <person name="Kremizki C."/>
            <person name="Layman D."/>
            <person name="Leonard S."/>
            <person name="Sun H."/>
            <person name="Fulton L."/>
            <person name="Nash W."/>
            <person name="Miner T."/>
            <person name="Minx P."/>
            <person name="Delehaunty K."/>
            <person name="Fronick C."/>
            <person name="Magrini V."/>
            <person name="Nhan M."/>
            <person name="Warren W."/>
            <person name="Florea L."/>
            <person name="Spieth J."/>
            <person name="Wilson R.K."/>
        </authorList>
    </citation>
    <scope>NUCLEOTIDE SEQUENCE [LARGE SCALE GENOMIC DNA]</scope>
    <source>
        <strain>ATCC 9150 / SARB42</strain>
    </source>
</reference>
<accession>Q5PCH1</accession>
<sequence>MQDRQKAQDYRALLLADTPLIDVRAPIEFEQGAMPGAINLPLMMDDERAAVGTCYKRQGADAALALGHRLVCGDIRQQRLEAWKAAYQRFPNGYLCCARGGQRSHIVQRWLKETGIDCPLIEGGYKALRQTAIQATWQLAQKPILLIGGCTGSGKTQLVRQQPNGVDLEGLARHRGSSFGRTLNPQLSQASFENKLAVELLKINAHQTLKRWVLEDEGRTIGANHLPECLRERMAQAPIAVVEDPFALRLERLREEYFIRMHHDFTHAYGDEAGWQAYSEYLHHGLFAIRRRLGLQRFAELTDTLDRALAEQLSSGSTDGHMAWLVPLLNEYYDPMYRYQLEKKAANIVFRGTWQDVANWLKEQ</sequence>
<comment type="function">
    <text evidence="1">Involved in the post-transcriptional modification of the uridine at the wobble position (U34) of tRNA(Lys), tRNA(Glu) and tRNA(Gln). Catalyzes the conversion of 2-thiouridine (S2U-RNA) to 2-selenouridine (Se2U-RNA). Acts in a two-step process involving geranylation of 2-thiouridine (S2U) to S-geranyl-2-thiouridine (geS2U) and subsequent selenation of the latter derivative to 2-selenouridine (Se2U) in the tRNA chain.</text>
</comment>
<comment type="catalytic activity">
    <reaction evidence="1">
        <text>5-methylaminomethyl-2-thiouridine(34) in tRNA + selenophosphate + (2E)-geranyl diphosphate + H2O + H(+) = 5-methylaminomethyl-2-selenouridine(34) in tRNA + (2E)-thiogeraniol + phosphate + diphosphate</text>
        <dbReference type="Rhea" id="RHEA:42716"/>
        <dbReference type="Rhea" id="RHEA-COMP:10195"/>
        <dbReference type="Rhea" id="RHEA-COMP:10196"/>
        <dbReference type="ChEBI" id="CHEBI:15377"/>
        <dbReference type="ChEBI" id="CHEBI:15378"/>
        <dbReference type="ChEBI" id="CHEBI:16144"/>
        <dbReference type="ChEBI" id="CHEBI:33019"/>
        <dbReference type="ChEBI" id="CHEBI:43474"/>
        <dbReference type="ChEBI" id="CHEBI:58057"/>
        <dbReference type="ChEBI" id="CHEBI:74455"/>
        <dbReference type="ChEBI" id="CHEBI:82743"/>
        <dbReference type="ChEBI" id="CHEBI:143703"/>
        <dbReference type="EC" id="2.9.1.3"/>
    </reaction>
    <physiologicalReaction direction="left-to-right" evidence="1">
        <dbReference type="Rhea" id="RHEA:42717"/>
    </physiologicalReaction>
</comment>
<comment type="catalytic activity">
    <reaction evidence="1">
        <text>5-methylaminomethyl-2-thiouridine(34) in tRNA + (2E)-geranyl diphosphate = 5-methylaminomethyl-S-(2E)-geranyl-thiouridine(34) in tRNA + diphosphate</text>
        <dbReference type="Rhea" id="RHEA:14085"/>
        <dbReference type="Rhea" id="RHEA-COMP:10195"/>
        <dbReference type="Rhea" id="RHEA-COMP:14654"/>
        <dbReference type="ChEBI" id="CHEBI:33019"/>
        <dbReference type="ChEBI" id="CHEBI:58057"/>
        <dbReference type="ChEBI" id="CHEBI:74455"/>
        <dbReference type="ChEBI" id="CHEBI:140632"/>
    </reaction>
    <physiologicalReaction direction="left-to-right" evidence="1">
        <dbReference type="Rhea" id="RHEA:14086"/>
    </physiologicalReaction>
</comment>
<comment type="catalytic activity">
    <reaction evidence="1">
        <text>5-methylaminomethyl-S-(2E)-geranyl-thiouridine(34) in tRNA + selenophosphate + H(+) = 5-methylaminomethyl-2-(Se-phospho)selenouridine(34) in tRNA + (2E)-thiogeraniol</text>
        <dbReference type="Rhea" id="RHEA:60172"/>
        <dbReference type="Rhea" id="RHEA-COMP:14654"/>
        <dbReference type="Rhea" id="RHEA-COMP:15523"/>
        <dbReference type="ChEBI" id="CHEBI:15378"/>
        <dbReference type="ChEBI" id="CHEBI:16144"/>
        <dbReference type="ChEBI" id="CHEBI:140632"/>
        <dbReference type="ChEBI" id="CHEBI:143702"/>
        <dbReference type="ChEBI" id="CHEBI:143703"/>
    </reaction>
    <physiologicalReaction direction="left-to-right" evidence="1">
        <dbReference type="Rhea" id="RHEA:60173"/>
    </physiologicalReaction>
</comment>
<comment type="catalytic activity">
    <reaction evidence="1">
        <text>5-methylaminomethyl-2-(Se-phospho)selenouridine(34) in tRNA + H2O = 5-methylaminomethyl-2-selenouridine(34) in tRNA + phosphate</text>
        <dbReference type="Rhea" id="RHEA:60176"/>
        <dbReference type="Rhea" id="RHEA-COMP:10196"/>
        <dbReference type="Rhea" id="RHEA-COMP:15523"/>
        <dbReference type="ChEBI" id="CHEBI:15377"/>
        <dbReference type="ChEBI" id="CHEBI:43474"/>
        <dbReference type="ChEBI" id="CHEBI:82743"/>
        <dbReference type="ChEBI" id="CHEBI:143702"/>
    </reaction>
    <physiologicalReaction direction="left-to-right" evidence="1">
        <dbReference type="Rhea" id="RHEA:60177"/>
    </physiologicalReaction>
</comment>
<comment type="subunit">
    <text evidence="1">Monomer.</text>
</comment>
<comment type="similarity">
    <text evidence="1">Belongs to the SelU family.</text>
</comment>
<gene>
    <name evidence="1" type="primary">selU</name>
    <name type="ordered locus">SPA2209</name>
</gene>
<name>SELU_SALPA</name>
<dbReference type="EC" id="2.9.1.3" evidence="1"/>
<dbReference type="EMBL" id="CP000026">
    <property type="protein sequence ID" value="AAV78096.1"/>
    <property type="molecule type" value="Genomic_DNA"/>
</dbReference>
<dbReference type="SMR" id="Q5PCH1"/>
<dbReference type="KEGG" id="spt:SPA2209"/>
<dbReference type="HOGENOM" id="CLU_043456_1_0_6"/>
<dbReference type="Proteomes" id="UP000008185">
    <property type="component" value="Chromosome"/>
</dbReference>
<dbReference type="GO" id="GO:0016765">
    <property type="term" value="F:transferase activity, transferring alkyl or aryl (other than methyl) groups"/>
    <property type="evidence" value="ECO:0007669"/>
    <property type="project" value="UniProtKB-UniRule"/>
</dbReference>
<dbReference type="GO" id="GO:0043828">
    <property type="term" value="F:tRNA 2-selenouridine synthase activity"/>
    <property type="evidence" value="ECO:0007669"/>
    <property type="project" value="UniProtKB-EC"/>
</dbReference>
<dbReference type="GO" id="GO:0002098">
    <property type="term" value="P:tRNA wobble uridine modification"/>
    <property type="evidence" value="ECO:0007669"/>
    <property type="project" value="UniProtKB-UniRule"/>
</dbReference>
<dbReference type="CDD" id="cd01520">
    <property type="entry name" value="RHOD_YbbB"/>
    <property type="match status" value="1"/>
</dbReference>
<dbReference type="FunFam" id="3.40.250.10:FF:000009">
    <property type="entry name" value="tRNA 2-selenouridine/geranyl-2-thiouridine synthase"/>
    <property type="match status" value="1"/>
</dbReference>
<dbReference type="Gene3D" id="3.40.250.10">
    <property type="entry name" value="Rhodanese-like domain"/>
    <property type="match status" value="1"/>
</dbReference>
<dbReference type="HAMAP" id="MF_01622">
    <property type="entry name" value="tRNA_sel_U_synth"/>
    <property type="match status" value="1"/>
</dbReference>
<dbReference type="InterPro" id="IPR001763">
    <property type="entry name" value="Rhodanese-like_dom"/>
</dbReference>
<dbReference type="InterPro" id="IPR036873">
    <property type="entry name" value="Rhodanese-like_dom_sf"/>
</dbReference>
<dbReference type="InterPro" id="IPR017582">
    <property type="entry name" value="SelU"/>
</dbReference>
<dbReference type="NCBIfam" id="NF008749">
    <property type="entry name" value="PRK11784.1-1"/>
    <property type="match status" value="1"/>
</dbReference>
<dbReference type="NCBIfam" id="NF008751">
    <property type="entry name" value="PRK11784.1-3"/>
    <property type="match status" value="1"/>
</dbReference>
<dbReference type="NCBIfam" id="TIGR03167">
    <property type="entry name" value="tRNA_sel_U_synt"/>
    <property type="match status" value="1"/>
</dbReference>
<dbReference type="PANTHER" id="PTHR30401">
    <property type="entry name" value="TRNA 2-SELENOURIDINE SYNTHASE"/>
    <property type="match status" value="1"/>
</dbReference>
<dbReference type="PANTHER" id="PTHR30401:SF0">
    <property type="entry name" value="TRNA 2-SELENOURIDINE SYNTHASE"/>
    <property type="match status" value="1"/>
</dbReference>
<dbReference type="Pfam" id="PF00581">
    <property type="entry name" value="Rhodanese"/>
    <property type="match status" value="1"/>
</dbReference>
<dbReference type="SMART" id="SM00450">
    <property type="entry name" value="RHOD"/>
    <property type="match status" value="1"/>
</dbReference>
<dbReference type="SUPFAM" id="SSF52821">
    <property type="entry name" value="Rhodanese/Cell cycle control phosphatase"/>
    <property type="match status" value="1"/>
</dbReference>
<dbReference type="PROSITE" id="PS50206">
    <property type="entry name" value="RHODANESE_3"/>
    <property type="match status" value="1"/>
</dbReference>
<protein>
    <recommendedName>
        <fullName evidence="1">tRNA 2-selenouridine synthase</fullName>
        <ecNumber evidence="1">2.9.1.3</ecNumber>
    </recommendedName>
</protein>
<organism>
    <name type="scientific">Salmonella paratyphi A (strain ATCC 9150 / SARB42)</name>
    <dbReference type="NCBI Taxonomy" id="295319"/>
    <lineage>
        <taxon>Bacteria</taxon>
        <taxon>Pseudomonadati</taxon>
        <taxon>Pseudomonadota</taxon>
        <taxon>Gammaproteobacteria</taxon>
        <taxon>Enterobacterales</taxon>
        <taxon>Enterobacteriaceae</taxon>
        <taxon>Salmonella</taxon>
    </lineage>
</organism>
<keyword id="KW-0711">Selenium</keyword>
<keyword id="KW-0808">Transferase</keyword>
<proteinExistence type="inferred from homology"/>
<feature type="chain" id="PRO_0000210873" description="tRNA 2-selenouridine synthase">
    <location>
        <begin position="1"/>
        <end position="364"/>
    </location>
</feature>
<feature type="domain" description="Rhodanese" evidence="1">
    <location>
        <begin position="14"/>
        <end position="137"/>
    </location>
</feature>
<feature type="active site" description="S-selanylcysteine intermediate" evidence="1">
    <location>
        <position position="97"/>
    </location>
</feature>